<name>TX337_LYCSI</name>
<proteinExistence type="evidence at transcript level"/>
<accession>B6DCT2</accession>
<evidence type="ECO:0000250" key="1"/>
<evidence type="ECO:0000255" key="2"/>
<evidence type="ECO:0000305" key="3"/>
<feature type="signal peptide" evidence="2">
    <location>
        <begin position="1"/>
        <end position="20"/>
    </location>
</feature>
<feature type="propeptide" id="PRO_0000401677" evidence="1">
    <location>
        <begin position="21"/>
        <end position="44"/>
    </location>
</feature>
<feature type="chain" id="PRO_0000401678" description="U3-lycotoxin-Ls1s">
    <location>
        <begin position="45"/>
        <end position="115"/>
    </location>
</feature>
<feature type="disulfide bond" evidence="1">
    <location>
        <begin position="48"/>
        <end position="63"/>
    </location>
</feature>
<feature type="disulfide bond" evidence="1">
    <location>
        <begin position="55"/>
        <end position="72"/>
    </location>
</feature>
<feature type="disulfide bond" evidence="1">
    <location>
        <begin position="62"/>
        <end position="87"/>
    </location>
</feature>
<feature type="disulfide bond" evidence="1">
    <location>
        <begin position="74"/>
        <end position="85"/>
    </location>
</feature>
<sequence length="115" mass="13432">MKFVLLFGVFLLTLFSYSSSEMLDDFDQADEDELLSLIEKEEARAKECTPRFYDCSHDRHSCCRTELFKDVCTCFYPKRGDNEVCTCQPPKHLMYMEKAADKAKKFGGKIKKWFG</sequence>
<comment type="subcellular location">
    <subcellularLocation>
        <location evidence="1">Secreted</location>
    </subcellularLocation>
</comment>
<comment type="tissue specificity">
    <text>Expressed by the venom gland.</text>
</comment>
<comment type="domain">
    <text evidence="1">The presence of a 'disulfide through disulfide knot' structurally defines this protein as a knottin.</text>
</comment>
<comment type="similarity">
    <text evidence="3">Belongs to the neurotoxin 19 (CSTX) family. 01 subfamily.</text>
</comment>
<dbReference type="EMBL" id="EU926016">
    <property type="protein sequence ID" value="ACI41348.1"/>
    <property type="molecule type" value="mRNA"/>
</dbReference>
<dbReference type="EMBL" id="FM864020">
    <property type="protein sequence ID" value="CAS03618.1"/>
    <property type="molecule type" value="mRNA"/>
</dbReference>
<dbReference type="SMR" id="B6DCT2"/>
<dbReference type="ArachnoServer" id="AS000965">
    <property type="toxin name" value="U3-lycotoxin-Ls1s"/>
</dbReference>
<dbReference type="GO" id="GO:0005576">
    <property type="term" value="C:extracellular region"/>
    <property type="evidence" value="ECO:0007669"/>
    <property type="project" value="UniProtKB-SubCell"/>
</dbReference>
<dbReference type="GO" id="GO:0090729">
    <property type="term" value="F:toxin activity"/>
    <property type="evidence" value="ECO:0007669"/>
    <property type="project" value="UniProtKB-KW"/>
</dbReference>
<dbReference type="InterPro" id="IPR011142">
    <property type="entry name" value="Spider_toxin_CSTX_Knottin_CS"/>
</dbReference>
<dbReference type="PROSITE" id="PS60029">
    <property type="entry name" value="SPIDER_CSTX"/>
    <property type="match status" value="1"/>
</dbReference>
<organism>
    <name type="scientific">Lycosa singoriensis</name>
    <name type="common">Wolf spider</name>
    <name type="synonym">Aranea singoriensis</name>
    <dbReference type="NCBI Taxonomy" id="434756"/>
    <lineage>
        <taxon>Eukaryota</taxon>
        <taxon>Metazoa</taxon>
        <taxon>Ecdysozoa</taxon>
        <taxon>Arthropoda</taxon>
        <taxon>Chelicerata</taxon>
        <taxon>Arachnida</taxon>
        <taxon>Araneae</taxon>
        <taxon>Araneomorphae</taxon>
        <taxon>Entelegynae</taxon>
        <taxon>Lycosoidea</taxon>
        <taxon>Lycosidae</taxon>
        <taxon>Lycosa</taxon>
    </lineage>
</organism>
<keyword id="KW-1015">Disulfide bond</keyword>
<keyword id="KW-0960">Knottin</keyword>
<keyword id="KW-0964">Secreted</keyword>
<keyword id="KW-0732">Signal</keyword>
<keyword id="KW-0800">Toxin</keyword>
<reference key="1">
    <citation type="journal article" date="2010" name="Zoology">
        <title>Transcriptome analysis of the venom glands of the Chinese wolf spider Lycosa singoriensis.</title>
        <authorList>
            <person name="Zhang Y."/>
            <person name="Chen J."/>
            <person name="Tang X."/>
            <person name="Wang F."/>
            <person name="Jiang L."/>
            <person name="Xiong X."/>
            <person name="Wang M."/>
            <person name="Rong M."/>
            <person name="Liu Z."/>
            <person name="Liang S."/>
        </authorList>
    </citation>
    <scope>NUCLEOTIDE SEQUENCE [LARGE SCALE MRNA]</scope>
    <source>
        <tissue>Venom gland</tissue>
    </source>
</reference>
<protein>
    <recommendedName>
        <fullName>U3-lycotoxin-Ls1s</fullName>
    </recommendedName>
    <alternativeName>
        <fullName>Toxin-like structure LSTX-B37</fullName>
    </alternativeName>
</protein>